<protein>
    <recommendedName>
        <fullName evidence="3">Small ribosomal subunit protein uS4c</fullName>
    </recommendedName>
    <alternativeName>
        <fullName>30S ribosomal protein S4, chloroplastic</fullName>
    </alternativeName>
</protein>
<evidence type="ECO:0000250" key="1"/>
<evidence type="ECO:0000256" key="2">
    <source>
        <dbReference type="SAM" id="MobiDB-lite"/>
    </source>
</evidence>
<evidence type="ECO:0000305" key="3"/>
<sequence>MSRYRGPRLKKIRRLGALPGLTRKTPKSGSNLKKKFHSGKKEQYRIRLQEKQKLRFHYGLTERQLLRYVHIAGKAKRSTGQVLLQLLEMRLDNILFRLGMASTIPGARQLVNHRHILVNGRIVDIPSFRCKPRDIITTKDNQRSKRLIQNSIASSDPGKLPKHLTIDTLQYKGLVKKILDRKWVGLKINELLVVEY</sequence>
<proteinExistence type="inferred from homology"/>
<feature type="chain" id="PRO_0000132538" description="Small ribosomal subunit protein uS4c">
    <location>
        <begin position="1"/>
        <end position="196" status="greater than"/>
    </location>
</feature>
<feature type="domain" description="S4 RNA-binding">
    <location>
        <begin position="89"/>
        <end position="150"/>
    </location>
</feature>
<feature type="region of interest" description="Disordered" evidence="2">
    <location>
        <begin position="17"/>
        <end position="36"/>
    </location>
</feature>
<feature type="non-terminal residue">
    <location>
        <position position="196"/>
    </location>
</feature>
<comment type="function">
    <text evidence="1">One of the primary rRNA binding proteins, it binds directly to 16S rRNA where it nucleates assembly of the body of the 30S subunit.</text>
</comment>
<comment type="function">
    <text evidence="1">With S5 and S12 plays an important role in translational accuracy.</text>
</comment>
<comment type="subunit">
    <text evidence="1">Part of the 30S ribosomal subunit. Contacts protein S5. The interaction surface between S4 and S5 is involved in control of translational fidelity (By similarity).</text>
</comment>
<comment type="subcellular location">
    <subcellularLocation>
        <location>Plastid</location>
        <location>Chloroplast</location>
    </subcellularLocation>
</comment>
<comment type="similarity">
    <text evidence="3">Belongs to the universal ribosomal protein uS4 family.</text>
</comment>
<gene>
    <name type="primary">rps4</name>
</gene>
<reference key="1">
    <citation type="journal article" date="1994" name="Plant Syst. Evol.">
        <title>The chloroplast gene rps4 as a tool for the study of Poaceae phylogeny.</title>
        <authorList>
            <person name="Nadot S."/>
            <person name="Bajon R."/>
            <person name="Lejeune B."/>
        </authorList>
        <dbReference type="AGRICOLA" id="IND20417698"/>
    </citation>
    <scope>NUCLEOTIDE SEQUENCE [GENOMIC DNA]</scope>
</reference>
<dbReference type="EMBL" id="Z29229">
    <property type="protein sequence ID" value="CAA82428.1"/>
    <property type="molecule type" value="Genomic_DNA"/>
</dbReference>
<dbReference type="PIR" id="S41255">
    <property type="entry name" value="S41255"/>
</dbReference>
<dbReference type="SMR" id="P69634"/>
<dbReference type="GO" id="GO:0009507">
    <property type="term" value="C:chloroplast"/>
    <property type="evidence" value="ECO:0007669"/>
    <property type="project" value="UniProtKB-SubCell"/>
</dbReference>
<dbReference type="GO" id="GO:0015935">
    <property type="term" value="C:small ribosomal subunit"/>
    <property type="evidence" value="ECO:0007669"/>
    <property type="project" value="InterPro"/>
</dbReference>
<dbReference type="GO" id="GO:0019843">
    <property type="term" value="F:rRNA binding"/>
    <property type="evidence" value="ECO:0007669"/>
    <property type="project" value="UniProtKB-KW"/>
</dbReference>
<dbReference type="GO" id="GO:0003735">
    <property type="term" value="F:structural constituent of ribosome"/>
    <property type="evidence" value="ECO:0007669"/>
    <property type="project" value="InterPro"/>
</dbReference>
<dbReference type="GO" id="GO:0042274">
    <property type="term" value="P:ribosomal small subunit biogenesis"/>
    <property type="evidence" value="ECO:0007669"/>
    <property type="project" value="TreeGrafter"/>
</dbReference>
<dbReference type="GO" id="GO:0006412">
    <property type="term" value="P:translation"/>
    <property type="evidence" value="ECO:0007669"/>
    <property type="project" value="InterPro"/>
</dbReference>
<dbReference type="CDD" id="cd00165">
    <property type="entry name" value="S4"/>
    <property type="match status" value="1"/>
</dbReference>
<dbReference type="FunFam" id="1.10.1050.10:FF:000002">
    <property type="entry name" value="30S ribosomal protein S4, chloroplastic"/>
    <property type="match status" value="1"/>
</dbReference>
<dbReference type="FunFam" id="3.10.290.10:FF:000081">
    <property type="entry name" value="30S ribosomal protein S4, chloroplastic"/>
    <property type="match status" value="1"/>
</dbReference>
<dbReference type="Gene3D" id="1.10.1050.10">
    <property type="entry name" value="Ribosomal Protein S4 Delta 41, Chain A, domain 1"/>
    <property type="match status" value="1"/>
</dbReference>
<dbReference type="Gene3D" id="3.10.290.10">
    <property type="entry name" value="RNA-binding S4 domain"/>
    <property type="match status" value="1"/>
</dbReference>
<dbReference type="HAMAP" id="MF_01306_B">
    <property type="entry name" value="Ribosomal_uS4_B"/>
    <property type="match status" value="1"/>
</dbReference>
<dbReference type="InterPro" id="IPR022801">
    <property type="entry name" value="Ribosomal_uS4"/>
</dbReference>
<dbReference type="InterPro" id="IPR005709">
    <property type="entry name" value="Ribosomal_uS4_bac-type"/>
</dbReference>
<dbReference type="InterPro" id="IPR018079">
    <property type="entry name" value="Ribosomal_uS4_CS"/>
</dbReference>
<dbReference type="InterPro" id="IPR001912">
    <property type="entry name" value="Ribosomal_uS4_N"/>
</dbReference>
<dbReference type="InterPro" id="IPR002942">
    <property type="entry name" value="S4_RNA-bd"/>
</dbReference>
<dbReference type="InterPro" id="IPR036986">
    <property type="entry name" value="S4_RNA-bd_sf"/>
</dbReference>
<dbReference type="NCBIfam" id="NF003717">
    <property type="entry name" value="PRK05327.1"/>
    <property type="match status" value="1"/>
</dbReference>
<dbReference type="NCBIfam" id="TIGR01017">
    <property type="entry name" value="rpsD_bact"/>
    <property type="match status" value="1"/>
</dbReference>
<dbReference type="PANTHER" id="PTHR11831">
    <property type="entry name" value="30S 40S RIBOSOMAL PROTEIN"/>
    <property type="match status" value="1"/>
</dbReference>
<dbReference type="PANTHER" id="PTHR11831:SF4">
    <property type="entry name" value="SMALL RIBOSOMAL SUBUNIT PROTEIN US4M"/>
    <property type="match status" value="1"/>
</dbReference>
<dbReference type="Pfam" id="PF00163">
    <property type="entry name" value="Ribosomal_S4"/>
    <property type="match status" value="1"/>
</dbReference>
<dbReference type="Pfam" id="PF01479">
    <property type="entry name" value="S4"/>
    <property type="match status" value="1"/>
</dbReference>
<dbReference type="SMART" id="SM01390">
    <property type="entry name" value="Ribosomal_S4"/>
    <property type="match status" value="1"/>
</dbReference>
<dbReference type="SMART" id="SM00363">
    <property type="entry name" value="S4"/>
    <property type="match status" value="1"/>
</dbReference>
<dbReference type="SUPFAM" id="SSF55174">
    <property type="entry name" value="Alpha-L RNA-binding motif"/>
    <property type="match status" value="1"/>
</dbReference>
<dbReference type="PROSITE" id="PS00632">
    <property type="entry name" value="RIBOSOMAL_S4"/>
    <property type="match status" value="1"/>
</dbReference>
<dbReference type="PROSITE" id="PS50889">
    <property type="entry name" value="S4"/>
    <property type="match status" value="1"/>
</dbReference>
<keyword id="KW-0150">Chloroplast</keyword>
<keyword id="KW-0934">Plastid</keyword>
<keyword id="KW-0687">Ribonucleoprotein</keyword>
<keyword id="KW-0689">Ribosomal protein</keyword>
<keyword id="KW-0694">RNA-binding</keyword>
<keyword id="KW-0699">rRNA-binding</keyword>
<geneLocation type="chloroplast"/>
<accession>P69634</accession>
<accession>P36448</accession>
<accession>P36469</accession>
<organism>
    <name type="scientific">Pseudosasa japonica</name>
    <name type="common">Arrow bamboo</name>
    <name type="synonym">Arundinaria japonica</name>
    <dbReference type="NCBI Taxonomy" id="29662"/>
    <lineage>
        <taxon>Eukaryota</taxon>
        <taxon>Viridiplantae</taxon>
        <taxon>Streptophyta</taxon>
        <taxon>Embryophyta</taxon>
        <taxon>Tracheophyta</taxon>
        <taxon>Spermatophyta</taxon>
        <taxon>Magnoliopsida</taxon>
        <taxon>Liliopsida</taxon>
        <taxon>Poales</taxon>
        <taxon>Poaceae</taxon>
        <taxon>BOP clade</taxon>
        <taxon>Bambusoideae</taxon>
        <taxon>Arundinarodae</taxon>
        <taxon>Arundinarieae</taxon>
        <taxon>Arundinariinae</taxon>
        <taxon>Pseudosasa</taxon>
    </lineage>
</organism>
<name>RR4_PSEJP</name>